<name>ACPS_PSECP</name>
<sequence length="115" mass="12326">MIVGIGVDVVDIERFGRQLERTPGLRDRLFVPAERELNTRSLAARFAAKEAVAKVLGAPAGMNWQDCWIGLDHNGPTVQVKGTVLAVAEAKGVKRWHLSISHDGGIATATVLAEG</sequence>
<comment type="function">
    <text evidence="1">Transfers the 4'-phosphopantetheine moiety from coenzyme A to a Ser of acyl-carrier-protein.</text>
</comment>
<comment type="catalytic activity">
    <reaction evidence="1">
        <text>apo-[ACP] + CoA = holo-[ACP] + adenosine 3',5'-bisphosphate + H(+)</text>
        <dbReference type="Rhea" id="RHEA:12068"/>
        <dbReference type="Rhea" id="RHEA-COMP:9685"/>
        <dbReference type="Rhea" id="RHEA-COMP:9690"/>
        <dbReference type="ChEBI" id="CHEBI:15378"/>
        <dbReference type="ChEBI" id="CHEBI:29999"/>
        <dbReference type="ChEBI" id="CHEBI:57287"/>
        <dbReference type="ChEBI" id="CHEBI:58343"/>
        <dbReference type="ChEBI" id="CHEBI:64479"/>
        <dbReference type="EC" id="2.7.8.7"/>
    </reaction>
</comment>
<comment type="cofactor">
    <cofactor evidence="1">
        <name>Mg(2+)</name>
        <dbReference type="ChEBI" id="CHEBI:18420"/>
    </cofactor>
</comment>
<comment type="subcellular location">
    <subcellularLocation>
        <location evidence="1">Cytoplasm</location>
    </subcellularLocation>
</comment>
<comment type="similarity">
    <text evidence="1">Belongs to the P-Pant transferase superfamily. AcpS family.</text>
</comment>
<dbReference type="EC" id="2.7.8.7" evidence="1"/>
<dbReference type="EMBL" id="CP001341">
    <property type="protein sequence ID" value="ACL40585.1"/>
    <property type="molecule type" value="Genomic_DNA"/>
</dbReference>
<dbReference type="RefSeq" id="WP_013601780.1">
    <property type="nucleotide sequence ID" value="NC_011886.1"/>
</dbReference>
<dbReference type="SMR" id="B8HCG9"/>
<dbReference type="STRING" id="452863.Achl_2620"/>
<dbReference type="KEGG" id="ach:Achl_2620"/>
<dbReference type="eggNOG" id="COG0736">
    <property type="taxonomic scope" value="Bacteria"/>
</dbReference>
<dbReference type="HOGENOM" id="CLU_089696_0_0_11"/>
<dbReference type="OrthoDB" id="517356at2"/>
<dbReference type="Proteomes" id="UP000002505">
    <property type="component" value="Chromosome"/>
</dbReference>
<dbReference type="GO" id="GO:0005737">
    <property type="term" value="C:cytoplasm"/>
    <property type="evidence" value="ECO:0007669"/>
    <property type="project" value="UniProtKB-SubCell"/>
</dbReference>
<dbReference type="GO" id="GO:0008897">
    <property type="term" value="F:holo-[acyl-carrier-protein] synthase activity"/>
    <property type="evidence" value="ECO:0007669"/>
    <property type="project" value="UniProtKB-UniRule"/>
</dbReference>
<dbReference type="GO" id="GO:0000287">
    <property type="term" value="F:magnesium ion binding"/>
    <property type="evidence" value="ECO:0007669"/>
    <property type="project" value="UniProtKB-UniRule"/>
</dbReference>
<dbReference type="GO" id="GO:0006633">
    <property type="term" value="P:fatty acid biosynthetic process"/>
    <property type="evidence" value="ECO:0007669"/>
    <property type="project" value="UniProtKB-UniRule"/>
</dbReference>
<dbReference type="Gene3D" id="3.90.470.20">
    <property type="entry name" value="4'-phosphopantetheinyl transferase domain"/>
    <property type="match status" value="1"/>
</dbReference>
<dbReference type="HAMAP" id="MF_00101">
    <property type="entry name" value="AcpS"/>
    <property type="match status" value="1"/>
</dbReference>
<dbReference type="InterPro" id="IPR008278">
    <property type="entry name" value="4-PPantetheinyl_Trfase_dom"/>
</dbReference>
<dbReference type="InterPro" id="IPR037143">
    <property type="entry name" value="4-PPantetheinyl_Trfase_dom_sf"/>
</dbReference>
<dbReference type="InterPro" id="IPR002582">
    <property type="entry name" value="ACPS"/>
</dbReference>
<dbReference type="InterPro" id="IPR004568">
    <property type="entry name" value="Ppantetheine-prot_Trfase_dom"/>
</dbReference>
<dbReference type="NCBIfam" id="TIGR00556">
    <property type="entry name" value="pantethn_trn"/>
    <property type="match status" value="1"/>
</dbReference>
<dbReference type="NCBIfam" id="NF000832">
    <property type="entry name" value="PRK00070.3-2"/>
    <property type="match status" value="1"/>
</dbReference>
<dbReference type="Pfam" id="PF01648">
    <property type="entry name" value="ACPS"/>
    <property type="match status" value="1"/>
</dbReference>
<dbReference type="SUPFAM" id="SSF56214">
    <property type="entry name" value="4'-phosphopantetheinyl transferase"/>
    <property type="match status" value="1"/>
</dbReference>
<evidence type="ECO:0000255" key="1">
    <source>
        <dbReference type="HAMAP-Rule" id="MF_00101"/>
    </source>
</evidence>
<accession>B8HCG9</accession>
<reference key="1">
    <citation type="submission" date="2009-01" db="EMBL/GenBank/DDBJ databases">
        <title>Complete sequence of chromosome of Arthrobacter chlorophenolicus A6.</title>
        <authorList>
            <consortium name="US DOE Joint Genome Institute"/>
            <person name="Lucas S."/>
            <person name="Copeland A."/>
            <person name="Lapidus A."/>
            <person name="Glavina del Rio T."/>
            <person name="Tice H."/>
            <person name="Bruce D."/>
            <person name="Goodwin L."/>
            <person name="Pitluck S."/>
            <person name="Goltsman E."/>
            <person name="Clum A."/>
            <person name="Larimer F."/>
            <person name="Land M."/>
            <person name="Hauser L."/>
            <person name="Kyrpides N."/>
            <person name="Mikhailova N."/>
            <person name="Jansson J."/>
            <person name="Richardson P."/>
        </authorList>
    </citation>
    <scope>NUCLEOTIDE SEQUENCE [LARGE SCALE GENOMIC DNA]</scope>
    <source>
        <strain>ATCC 700700 / DSM 12829 / CIP 107037 / JCM 12360 / KCTC 9906 / NCIMB 13794 / A6</strain>
    </source>
</reference>
<proteinExistence type="inferred from homology"/>
<protein>
    <recommendedName>
        <fullName evidence="1">Holo-[acyl-carrier-protein] synthase</fullName>
        <shortName evidence="1">Holo-ACP synthase</shortName>
        <ecNumber evidence="1">2.7.8.7</ecNumber>
    </recommendedName>
    <alternativeName>
        <fullName evidence="1">4'-phosphopantetheinyl transferase AcpS</fullName>
    </alternativeName>
</protein>
<organism>
    <name type="scientific">Pseudarthrobacter chlorophenolicus (strain ATCC 700700 / DSM 12829 / CIP 107037 / JCM 12360 / KCTC 9906 / NCIMB 13794 / A6)</name>
    <name type="common">Arthrobacter chlorophenolicus</name>
    <dbReference type="NCBI Taxonomy" id="452863"/>
    <lineage>
        <taxon>Bacteria</taxon>
        <taxon>Bacillati</taxon>
        <taxon>Actinomycetota</taxon>
        <taxon>Actinomycetes</taxon>
        <taxon>Micrococcales</taxon>
        <taxon>Micrococcaceae</taxon>
        <taxon>Pseudarthrobacter</taxon>
    </lineage>
</organism>
<keyword id="KW-0963">Cytoplasm</keyword>
<keyword id="KW-0275">Fatty acid biosynthesis</keyword>
<keyword id="KW-0276">Fatty acid metabolism</keyword>
<keyword id="KW-0444">Lipid biosynthesis</keyword>
<keyword id="KW-0443">Lipid metabolism</keyword>
<keyword id="KW-0460">Magnesium</keyword>
<keyword id="KW-0479">Metal-binding</keyword>
<keyword id="KW-0808">Transferase</keyword>
<feature type="chain" id="PRO_1000118789" description="Holo-[acyl-carrier-protein] synthase">
    <location>
        <begin position="1"/>
        <end position="115"/>
    </location>
</feature>
<feature type="binding site" evidence="1">
    <location>
        <position position="8"/>
    </location>
    <ligand>
        <name>Mg(2+)</name>
        <dbReference type="ChEBI" id="CHEBI:18420"/>
    </ligand>
</feature>
<feature type="binding site" evidence="1">
    <location>
        <position position="50"/>
    </location>
    <ligand>
        <name>Mg(2+)</name>
        <dbReference type="ChEBI" id="CHEBI:18420"/>
    </ligand>
</feature>
<gene>
    <name evidence="1" type="primary">acpS</name>
    <name type="ordered locus">Achl_2620</name>
</gene>